<reference key="1">
    <citation type="journal article" date="2002" name="Proc. Natl. Acad. Sci. U.S.A.">
        <title>The complete genome of hyperthermophile Methanopyrus kandleri AV19 and monophyly of archaeal methanogens.</title>
        <authorList>
            <person name="Slesarev A.I."/>
            <person name="Mezhevaya K.V."/>
            <person name="Makarova K.S."/>
            <person name="Polushin N.N."/>
            <person name="Shcherbinina O.V."/>
            <person name="Shakhova V.V."/>
            <person name="Belova G.I."/>
            <person name="Aravind L."/>
            <person name="Natale D.A."/>
            <person name="Rogozin I.B."/>
            <person name="Tatusov R.L."/>
            <person name="Wolf Y.I."/>
            <person name="Stetter K.O."/>
            <person name="Malykh A.G."/>
            <person name="Koonin E.V."/>
            <person name="Kozyavkin S.A."/>
        </authorList>
    </citation>
    <scope>NUCLEOTIDE SEQUENCE [LARGE SCALE GENOMIC DNA]</scope>
    <source>
        <strain>AV19 / DSM 6324 / JCM 9639 / NBRC 100938</strain>
    </source>
</reference>
<dbReference type="EC" id="4.3.3.6" evidence="1"/>
<dbReference type="EMBL" id="AE009439">
    <property type="protein sequence ID" value="AAM02584.1"/>
    <property type="molecule type" value="Genomic_DNA"/>
</dbReference>
<dbReference type="RefSeq" id="WP_011019739.1">
    <property type="nucleotide sequence ID" value="NC_003551.1"/>
</dbReference>
<dbReference type="SMR" id="Q8TVL8"/>
<dbReference type="FunCoup" id="Q8TVL8">
    <property type="interactions" value="153"/>
</dbReference>
<dbReference type="STRING" id="190192.MK1371"/>
<dbReference type="PaxDb" id="190192-MK1371"/>
<dbReference type="EnsemblBacteria" id="AAM02584">
    <property type="protein sequence ID" value="AAM02584"/>
    <property type="gene ID" value="MK1371"/>
</dbReference>
<dbReference type="GeneID" id="1477966"/>
<dbReference type="KEGG" id="mka:MK1371"/>
<dbReference type="PATRIC" id="fig|190192.8.peg.1525"/>
<dbReference type="HOGENOM" id="CLU_055352_1_0_2"/>
<dbReference type="InParanoid" id="Q8TVL8"/>
<dbReference type="OrthoDB" id="6840at2157"/>
<dbReference type="UniPathway" id="UPA00245"/>
<dbReference type="Proteomes" id="UP000001826">
    <property type="component" value="Chromosome"/>
</dbReference>
<dbReference type="GO" id="GO:0036381">
    <property type="term" value="F:pyridoxal 5'-phosphate synthase (glutamine hydrolysing) activity"/>
    <property type="evidence" value="ECO:0007669"/>
    <property type="project" value="UniProtKB-UniRule"/>
</dbReference>
<dbReference type="GO" id="GO:0006520">
    <property type="term" value="P:amino acid metabolic process"/>
    <property type="evidence" value="ECO:0007669"/>
    <property type="project" value="TreeGrafter"/>
</dbReference>
<dbReference type="GO" id="GO:0042823">
    <property type="term" value="P:pyridoxal phosphate biosynthetic process"/>
    <property type="evidence" value="ECO:0007669"/>
    <property type="project" value="UniProtKB-UniRule"/>
</dbReference>
<dbReference type="GO" id="GO:0008615">
    <property type="term" value="P:pyridoxine biosynthetic process"/>
    <property type="evidence" value="ECO:0007669"/>
    <property type="project" value="TreeGrafter"/>
</dbReference>
<dbReference type="CDD" id="cd04727">
    <property type="entry name" value="pdxS"/>
    <property type="match status" value="1"/>
</dbReference>
<dbReference type="FunFam" id="3.20.20.70:FF:000001">
    <property type="entry name" value="Pyridoxine biosynthesis protein PDX1"/>
    <property type="match status" value="1"/>
</dbReference>
<dbReference type="Gene3D" id="3.20.20.70">
    <property type="entry name" value="Aldolase class I"/>
    <property type="match status" value="1"/>
</dbReference>
<dbReference type="HAMAP" id="MF_01824">
    <property type="entry name" value="PdxS"/>
    <property type="match status" value="1"/>
</dbReference>
<dbReference type="InterPro" id="IPR013785">
    <property type="entry name" value="Aldolase_TIM"/>
</dbReference>
<dbReference type="InterPro" id="IPR001852">
    <property type="entry name" value="PdxS/SNZ"/>
</dbReference>
<dbReference type="InterPro" id="IPR033755">
    <property type="entry name" value="PdxS/SNZ_N"/>
</dbReference>
<dbReference type="InterPro" id="IPR011060">
    <property type="entry name" value="RibuloseP-bd_barrel"/>
</dbReference>
<dbReference type="NCBIfam" id="NF003215">
    <property type="entry name" value="PRK04180.1"/>
    <property type="match status" value="1"/>
</dbReference>
<dbReference type="NCBIfam" id="TIGR00343">
    <property type="entry name" value="pyridoxal 5'-phosphate synthase lyase subunit PdxS"/>
    <property type="match status" value="1"/>
</dbReference>
<dbReference type="PANTHER" id="PTHR31829">
    <property type="entry name" value="PYRIDOXAL 5'-PHOSPHATE SYNTHASE SUBUNIT SNZ1-RELATED"/>
    <property type="match status" value="1"/>
</dbReference>
<dbReference type="PANTHER" id="PTHR31829:SF0">
    <property type="entry name" value="PYRIDOXAL 5'-PHOSPHATE SYNTHASE SUBUNIT SNZ1-RELATED"/>
    <property type="match status" value="1"/>
</dbReference>
<dbReference type="Pfam" id="PF01680">
    <property type="entry name" value="SOR_SNZ"/>
    <property type="match status" value="1"/>
</dbReference>
<dbReference type="PIRSF" id="PIRSF029271">
    <property type="entry name" value="Pdx1"/>
    <property type="match status" value="1"/>
</dbReference>
<dbReference type="SUPFAM" id="SSF51366">
    <property type="entry name" value="Ribulose-phoshate binding barrel"/>
    <property type="match status" value="1"/>
</dbReference>
<dbReference type="PROSITE" id="PS01235">
    <property type="entry name" value="PDXS_SNZ_1"/>
    <property type="match status" value="1"/>
</dbReference>
<dbReference type="PROSITE" id="PS51129">
    <property type="entry name" value="PDXS_SNZ_2"/>
    <property type="match status" value="1"/>
</dbReference>
<organism>
    <name type="scientific">Methanopyrus kandleri (strain AV19 / DSM 6324 / JCM 9639 / NBRC 100938)</name>
    <dbReference type="NCBI Taxonomy" id="190192"/>
    <lineage>
        <taxon>Archaea</taxon>
        <taxon>Methanobacteriati</taxon>
        <taxon>Methanobacteriota</taxon>
        <taxon>Methanomada group</taxon>
        <taxon>Methanopyri</taxon>
        <taxon>Methanopyrales</taxon>
        <taxon>Methanopyraceae</taxon>
        <taxon>Methanopyrus</taxon>
    </lineage>
</organism>
<proteinExistence type="inferred from homology"/>
<comment type="function">
    <text evidence="1">Catalyzes the formation of pyridoxal 5'-phosphate from ribose 5-phosphate (RBP), glyceraldehyde 3-phosphate (G3P) and ammonia. The ammonia is provided by the PdxT subunit. Can also use ribulose 5-phosphate and dihydroxyacetone phosphate as substrates, resulting from enzyme-catalyzed isomerization of RBP and G3P, respectively.</text>
</comment>
<comment type="catalytic activity">
    <reaction evidence="1">
        <text>aldehydo-D-ribose 5-phosphate + D-glyceraldehyde 3-phosphate + L-glutamine = pyridoxal 5'-phosphate + L-glutamate + phosphate + 3 H2O + H(+)</text>
        <dbReference type="Rhea" id="RHEA:31507"/>
        <dbReference type="ChEBI" id="CHEBI:15377"/>
        <dbReference type="ChEBI" id="CHEBI:15378"/>
        <dbReference type="ChEBI" id="CHEBI:29985"/>
        <dbReference type="ChEBI" id="CHEBI:43474"/>
        <dbReference type="ChEBI" id="CHEBI:58273"/>
        <dbReference type="ChEBI" id="CHEBI:58359"/>
        <dbReference type="ChEBI" id="CHEBI:59776"/>
        <dbReference type="ChEBI" id="CHEBI:597326"/>
        <dbReference type="EC" id="4.3.3.6"/>
    </reaction>
</comment>
<comment type="pathway">
    <text evidence="1">Cofactor biosynthesis; pyridoxal 5'-phosphate biosynthesis.</text>
</comment>
<comment type="subunit">
    <text evidence="1">In the presence of PdxT, forms a dodecamer of heterodimers.</text>
</comment>
<comment type="similarity">
    <text evidence="1">Belongs to the PdxS/SNZ family.</text>
</comment>
<feature type="chain" id="PRO_0000109436" description="Pyridoxal 5'-phosphate synthase subunit PdxS">
    <location>
        <begin position="1"/>
        <end position="295"/>
    </location>
</feature>
<feature type="active site" description="Schiff-base intermediate with D-ribose 5-phosphate" evidence="1">
    <location>
        <position position="80"/>
    </location>
</feature>
<feature type="binding site" evidence="1">
    <location>
        <position position="23"/>
    </location>
    <ligand>
        <name>D-ribose 5-phosphate</name>
        <dbReference type="ChEBI" id="CHEBI:78346"/>
    </ligand>
</feature>
<feature type="binding site" evidence="1">
    <location>
        <position position="152"/>
    </location>
    <ligand>
        <name>D-ribose 5-phosphate</name>
        <dbReference type="ChEBI" id="CHEBI:78346"/>
    </ligand>
</feature>
<feature type="binding site" evidence="1">
    <location>
        <position position="164"/>
    </location>
    <ligand>
        <name>D-glyceraldehyde 3-phosphate</name>
        <dbReference type="ChEBI" id="CHEBI:59776"/>
    </ligand>
</feature>
<feature type="binding site" evidence="1">
    <location>
        <position position="213"/>
    </location>
    <ligand>
        <name>D-ribose 5-phosphate</name>
        <dbReference type="ChEBI" id="CHEBI:78346"/>
    </ligand>
</feature>
<feature type="binding site" evidence="1">
    <location>
        <begin position="234"/>
        <end position="235"/>
    </location>
    <ligand>
        <name>D-ribose 5-phosphate</name>
        <dbReference type="ChEBI" id="CHEBI:78346"/>
    </ligand>
</feature>
<accession>Q8TVL8</accession>
<protein>
    <recommendedName>
        <fullName evidence="1">Pyridoxal 5'-phosphate synthase subunit PdxS</fullName>
        <shortName evidence="1">PLP synthase subunit PdxS</shortName>
        <ecNumber evidence="1">4.3.3.6</ecNumber>
    </recommendedName>
    <alternativeName>
        <fullName evidence="1">Pdx1</fullName>
    </alternativeName>
</protein>
<evidence type="ECO:0000255" key="1">
    <source>
        <dbReference type="HAMAP-Rule" id="MF_01824"/>
    </source>
</evidence>
<sequence>MKTGTWRVKTGFARMLKGGVVMDVTNVEQAQIAEDAGAVAVMVLEKVPADIRAAGGVARMCDPAKIEEIMDHVTIPVMAKCRIGHVAEAQVLEAIGVDMIDESEVLTPADEEHHINKWEFEVPFVCGARNLGEALRRIAEGAAMIRTKGEAGTGNVAEAVRHMRIIRREISELTRLDKEELYGKAKEYGVPFDLVAEVASLGRLPVVNFAAGGIATPADAALMMQLGADGIFVGSGIFKSDRPQEMAEAIVEATAYYDDPEVVAEVSKNLGDEVAMRGLEISEIPEEERMQLRGE</sequence>
<gene>
    <name evidence="1" type="primary">pdxS</name>
    <name type="synonym">snz1</name>
    <name type="ordered locus">MK1371</name>
</gene>
<name>PDXS_METKA</name>
<keyword id="KW-0456">Lyase</keyword>
<keyword id="KW-0663">Pyridoxal phosphate</keyword>
<keyword id="KW-1185">Reference proteome</keyword>
<keyword id="KW-0704">Schiff base</keyword>